<organism>
    <name type="scientific">Homo sapiens</name>
    <name type="common">Human</name>
    <dbReference type="NCBI Taxonomy" id="9606"/>
    <lineage>
        <taxon>Eukaryota</taxon>
        <taxon>Metazoa</taxon>
        <taxon>Chordata</taxon>
        <taxon>Craniata</taxon>
        <taxon>Vertebrata</taxon>
        <taxon>Euteleostomi</taxon>
        <taxon>Mammalia</taxon>
        <taxon>Eutheria</taxon>
        <taxon>Euarchontoglires</taxon>
        <taxon>Primates</taxon>
        <taxon>Haplorrhini</taxon>
        <taxon>Catarrhini</taxon>
        <taxon>Hominidae</taxon>
        <taxon>Homo</taxon>
    </lineage>
</organism>
<sequence length="62" mass="6654">MCGSYYGNYYGDHGYGCCGYEGLGYGYGSLRCGYSSCCGYGHGYGSRFFCGCGYGCGSGYYY</sequence>
<dbReference type="EMBL" id="AB096952">
    <property type="protein sequence ID" value="BAE46367.1"/>
    <property type="molecule type" value="mRNA"/>
</dbReference>
<dbReference type="CCDS" id="CCDS13600.1"/>
<dbReference type="RefSeq" id="NP_853635.1">
    <property type="nucleotide sequence ID" value="NM_181604.2"/>
</dbReference>
<dbReference type="BioGRID" id="130650">
    <property type="interactions" value="187"/>
</dbReference>
<dbReference type="FunCoup" id="Q3LI66">
    <property type="interactions" value="30"/>
</dbReference>
<dbReference type="IntAct" id="Q3LI66">
    <property type="interactions" value="181"/>
</dbReference>
<dbReference type="STRING" id="9606.ENSP00000334560"/>
<dbReference type="iPTMnet" id="Q3LI66"/>
<dbReference type="PhosphoSitePlus" id="Q3LI66"/>
<dbReference type="BioMuta" id="KRTAP6-2"/>
<dbReference type="PaxDb" id="9606-ENSP00000334560"/>
<dbReference type="DNASU" id="337967"/>
<dbReference type="Ensembl" id="ENST00000334897.4">
    <property type="protein sequence ID" value="ENSP00000334560.3"/>
    <property type="gene ID" value="ENSG00000186930.4"/>
</dbReference>
<dbReference type="GeneID" id="337967"/>
<dbReference type="KEGG" id="hsa:337967"/>
<dbReference type="MANE-Select" id="ENST00000334897.4">
    <property type="protein sequence ID" value="ENSP00000334560.3"/>
    <property type="RefSeq nucleotide sequence ID" value="NM_181604.2"/>
    <property type="RefSeq protein sequence ID" value="NP_853635.1"/>
</dbReference>
<dbReference type="UCSC" id="uc011adc.3">
    <property type="organism name" value="human"/>
</dbReference>
<dbReference type="AGR" id="HGNC:18932"/>
<dbReference type="CTD" id="337967"/>
<dbReference type="GeneCards" id="KRTAP6-2"/>
<dbReference type="HGNC" id="HGNC:18932">
    <property type="gene designation" value="KRTAP6-2"/>
</dbReference>
<dbReference type="HPA" id="ENSG00000186930">
    <property type="expression patterns" value="Not detected"/>
</dbReference>
<dbReference type="neXtProt" id="NX_Q3LI66"/>
<dbReference type="PharmGKB" id="PA134980095"/>
<dbReference type="VEuPathDB" id="HostDB:ENSG00000186930"/>
<dbReference type="eggNOG" id="ENOG502TBSA">
    <property type="taxonomic scope" value="Eukaryota"/>
</dbReference>
<dbReference type="GeneTree" id="ENSGT00950000183416"/>
<dbReference type="HOGENOM" id="CLU_182642_0_0_1"/>
<dbReference type="InParanoid" id="Q3LI66"/>
<dbReference type="OMA" id="GYSSCCG"/>
<dbReference type="PAN-GO" id="Q3LI66">
    <property type="GO annotations" value="0 GO annotations based on evolutionary models"/>
</dbReference>
<dbReference type="PathwayCommons" id="Q3LI66"/>
<dbReference type="Reactome" id="R-HSA-6805567">
    <property type="pathway name" value="Keratinization"/>
</dbReference>
<dbReference type="SignaLink" id="Q3LI66"/>
<dbReference type="BioGRID-ORCS" id="337967">
    <property type="hits" value="15 hits in 1143 CRISPR screens"/>
</dbReference>
<dbReference type="GenomeRNAi" id="337967"/>
<dbReference type="Pharos" id="Q3LI66">
    <property type="development level" value="Tdark"/>
</dbReference>
<dbReference type="PRO" id="PR:Q3LI66"/>
<dbReference type="Proteomes" id="UP000005640">
    <property type="component" value="Chromosome 21"/>
</dbReference>
<dbReference type="RNAct" id="Q3LI66">
    <property type="molecule type" value="protein"/>
</dbReference>
<dbReference type="Bgee" id="ENSG00000186930">
    <property type="expression patterns" value="Expressed in male germ line stem cell (sensu Vertebrata) in testis and 9 other cell types or tissues"/>
</dbReference>
<dbReference type="GO" id="GO:0005829">
    <property type="term" value="C:cytosol"/>
    <property type="evidence" value="ECO:0000304"/>
    <property type="project" value="Reactome"/>
</dbReference>
<dbReference type="GO" id="GO:0005882">
    <property type="term" value="C:intermediate filament"/>
    <property type="evidence" value="ECO:0007669"/>
    <property type="project" value="UniProtKB-KW"/>
</dbReference>
<dbReference type="GO" id="GO:0042802">
    <property type="term" value="F:identical protein binding"/>
    <property type="evidence" value="ECO:0000353"/>
    <property type="project" value="IntAct"/>
</dbReference>
<dbReference type="GO" id="GO:0031424">
    <property type="term" value="P:keratinization"/>
    <property type="evidence" value="ECO:0007669"/>
    <property type="project" value="InterPro"/>
</dbReference>
<dbReference type="InterPro" id="IPR040313">
    <property type="entry name" value="KAP6"/>
</dbReference>
<dbReference type="PANTHER" id="PTHR31678:SF3">
    <property type="entry name" value="KERATIN-ASSOCIATED PROTEIN 6-2"/>
    <property type="match status" value="1"/>
</dbReference>
<dbReference type="PANTHER" id="PTHR31678">
    <property type="entry name" value="KERATIN-ASSOCIATED PROTEIN 6-3"/>
    <property type="match status" value="1"/>
</dbReference>
<proteinExistence type="evidence at protein level"/>
<accession>Q3LI66</accession>
<keyword id="KW-0416">Keratin</keyword>
<keyword id="KW-1185">Reference proteome</keyword>
<keyword id="KW-0677">Repeat</keyword>
<name>KRA62_HUMAN</name>
<reference key="1">
    <citation type="submission" date="2002-11" db="EMBL/GenBank/DDBJ databases">
        <title>Identification of eight novel genes from keratin associated protein gene cluster on human chromosome 21q22.11.</title>
        <authorList>
            <person name="Obayashi I."/>
            <person name="Shibuya K."/>
            <person name="Kudoh J."/>
            <person name="Shimizu N."/>
        </authorList>
    </citation>
    <scope>NUCLEOTIDE SEQUENCE [MRNA]</scope>
    <source>
        <tissue>Testis</tissue>
    </source>
</reference>
<gene>
    <name type="primary">KRTAP6-2</name>
    <name type="synonym">KAP6.2</name>
</gene>
<evidence type="ECO:0000250" key="1"/>
<evidence type="ECO:0000305" key="2"/>
<comment type="function">
    <text>In the hair cortex, hair keratin intermediate filaments are embedded in an interfilamentous matrix, consisting of hair keratin-associated proteins (KRTAP), which are essential for the formation of a rigid and resistant hair shaft through their extensive disulfide bond cross-linking with abundant cysteine residues of hair keratins. The matrix proteins include the high-sulfur and high-glycine-tyrosine keratins.</text>
</comment>
<comment type="subunit">
    <text evidence="1">Interacts with hair keratins.</text>
</comment>
<comment type="interaction">
    <interactant intactId="EBI-11962084">
        <id>Q3LI66</id>
    </interactant>
    <interactant intactId="EBI-12006944">
        <id>O43184-4</id>
        <label>ADAM12</label>
    </interactant>
    <organismsDiffer>false</organismsDiffer>
    <experiments>3</experiments>
</comment>
<comment type="interaction">
    <interactant intactId="EBI-11962084">
        <id>Q3LI66</id>
    </interactant>
    <interactant intactId="EBI-10173507">
        <id>Q6UY14-3</id>
        <label>ADAMTSL4</label>
    </interactant>
    <organismsDiffer>false</organismsDiffer>
    <experiments>3</experiments>
</comment>
<comment type="interaction">
    <interactant intactId="EBI-11962084">
        <id>Q3LI66</id>
    </interactant>
    <interactant intactId="EBI-12224467">
        <id>Q9NYG5-2</id>
        <label>ANAPC11</label>
    </interactant>
    <organismsDiffer>false</organismsDiffer>
    <experiments>3</experiments>
</comment>
<comment type="interaction">
    <interactant intactId="EBI-11962084">
        <id>Q3LI66</id>
    </interactant>
    <interactant intactId="EBI-11954519">
        <id>Q49AR9</id>
        <label>ANKS1A</label>
    </interactant>
    <organismsDiffer>false</organismsDiffer>
    <experiments>3</experiments>
</comment>
<comment type="interaction">
    <interactant intactId="EBI-11962084">
        <id>Q3LI66</id>
    </interactant>
    <interactant intactId="EBI-715243">
        <id>P50995</id>
        <label>ANXA11</label>
    </interactant>
    <organismsDiffer>false</organismsDiffer>
    <experiments>3</experiments>
</comment>
<comment type="interaction">
    <interactant intactId="EBI-11962084">
        <id>Q3LI66</id>
    </interactant>
    <interactant intactId="EBI-12819523">
        <id>P41238</id>
        <label>APOBEC1</label>
    </interactant>
    <organismsDiffer>false</organismsDiffer>
    <experiments>3</experiments>
</comment>
<comment type="interaction">
    <interactant intactId="EBI-11962084">
        <id>Q3LI66</id>
    </interactant>
    <interactant intactId="EBI-745213">
        <id>P29972</id>
        <label>AQP1</label>
    </interactant>
    <organismsDiffer>false</organismsDiffer>
    <experiments>3</experiments>
</comment>
<comment type="interaction">
    <interactant intactId="EBI-11962084">
        <id>Q3LI66</id>
    </interactant>
    <interactant intactId="EBI-948603">
        <id>Q03989</id>
        <label>ARID5A</label>
    </interactant>
    <organismsDiffer>false</organismsDiffer>
    <experiments>3</experiments>
</comment>
<comment type="interaction">
    <interactant intactId="EBI-11962084">
        <id>Q3LI66</id>
    </interactant>
    <interactant intactId="EBI-12006308">
        <id>Q7Z3C6-3</id>
        <label>ATG9A</label>
    </interactant>
    <organismsDiffer>false</organismsDiffer>
    <experiments>5</experiments>
</comment>
<comment type="interaction">
    <interactant intactId="EBI-11962084">
        <id>Q3LI66</id>
    </interactant>
    <interactant intactId="EBI-11954292">
        <id>Q86V38</id>
        <label>ATN1</label>
    </interactant>
    <organismsDiffer>false</organismsDiffer>
    <experiments>3</experiments>
</comment>
<comment type="interaction">
    <interactant intactId="EBI-11962084">
        <id>Q3LI66</id>
    </interactant>
    <interactant intactId="EBI-745689">
        <id>Q7L5A3</id>
        <label>ATOSB</label>
    </interactant>
    <organismsDiffer>false</organismsDiffer>
    <experiments>3</experiments>
</comment>
<comment type="interaction">
    <interactant intactId="EBI-11962084">
        <id>Q3LI66</id>
    </interactant>
    <interactant intactId="EBI-1166928">
        <id>Q8N5M1</id>
        <label>ATPAF2</label>
    </interactant>
    <organismsDiffer>false</organismsDiffer>
    <experiments>3</experiments>
</comment>
<comment type="interaction">
    <interactant intactId="EBI-11962084">
        <id>Q3LI66</id>
    </interactant>
    <interactant intactId="EBI-745073">
        <id>Q9BXY8</id>
        <label>BEX2</label>
    </interactant>
    <organismsDiffer>false</organismsDiffer>
    <experiments>3</experiments>
</comment>
<comment type="interaction">
    <interactant intactId="EBI-11962084">
        <id>Q3LI66</id>
    </interactant>
    <interactant intactId="EBI-711810">
        <id>O14503</id>
        <label>BHLHE40</label>
    </interactant>
    <organismsDiffer>false</organismsDiffer>
    <experiments>3</experiments>
</comment>
<comment type="interaction">
    <interactant intactId="EBI-11962084">
        <id>Q3LI66</id>
    </interactant>
    <interactant intactId="EBI-12809220">
        <id>Q5SWW7</id>
        <label>C10orf55</label>
    </interactant>
    <organismsDiffer>false</organismsDiffer>
    <experiments>3</experiments>
</comment>
<comment type="interaction">
    <interactant intactId="EBI-11962084">
        <id>Q3LI66</id>
    </interactant>
    <interactant intactId="EBI-946029">
        <id>Q6P1W5</id>
        <label>C1orf94</label>
    </interactant>
    <organismsDiffer>false</organismsDiffer>
    <experiments>3</experiments>
</comment>
<comment type="interaction">
    <interactant intactId="EBI-11962084">
        <id>Q3LI66</id>
    </interactant>
    <interactant intactId="EBI-11990870">
        <id>Q6UXA7</id>
        <label>C6orf15</label>
    </interactant>
    <organismsDiffer>false</organismsDiffer>
    <experiments>3</experiments>
</comment>
<comment type="interaction">
    <interactant intactId="EBI-11962084">
        <id>Q3LI66</id>
    </interactant>
    <interactant intactId="EBI-1383687">
        <id>Q9UQM7</id>
        <label>CAMK2A</label>
    </interactant>
    <organismsDiffer>false</organismsDiffer>
    <experiments>3</experiments>
</comment>
<comment type="interaction">
    <interactant intactId="EBI-11962084">
        <id>Q3LI66</id>
    </interactant>
    <interactant intactId="EBI-11523526">
        <id>Q13554-3</id>
        <label>CAMK2B</label>
    </interactant>
    <organismsDiffer>false</organismsDiffer>
    <experiments>3</experiments>
</comment>
<comment type="interaction">
    <interactant intactId="EBI-11962084">
        <id>Q3LI66</id>
    </interactant>
    <interactant intactId="EBI-299118">
        <id>O15234</id>
        <label>CASC3</label>
    </interactant>
    <organismsDiffer>false</organismsDiffer>
    <experiments>5</experiments>
</comment>
<comment type="interaction">
    <interactant intactId="EBI-11962084">
        <id>Q3LI66</id>
    </interactant>
    <interactant intactId="EBI-744545">
        <id>Q8NEC5</id>
        <label>CATSPER1</label>
    </interactant>
    <organismsDiffer>false</organismsDiffer>
    <experiments>3</experiments>
</comment>
<comment type="interaction">
    <interactant intactId="EBI-11962084">
        <id>Q3LI66</id>
    </interactant>
    <interactant intactId="EBI-744556">
        <id>Q96HB5</id>
        <label>CCDC120</label>
    </interactant>
    <organismsDiffer>false</organismsDiffer>
    <experiments>3</experiments>
</comment>
<comment type="interaction">
    <interactant intactId="EBI-11962084">
        <id>Q3LI66</id>
    </interactant>
    <interactant intactId="EBI-12165781">
        <id>Q96LX7-5</id>
        <label>CCDC17</label>
    </interactant>
    <organismsDiffer>false</organismsDiffer>
    <experiments>3</experiments>
</comment>
<comment type="interaction">
    <interactant intactId="EBI-11962084">
        <id>Q3LI66</id>
    </interactant>
    <interactant intactId="EBI-746041">
        <id>Q8TC90</id>
        <label>CCER1</label>
    </interactant>
    <organismsDiffer>false</organismsDiffer>
    <experiments>3</experiments>
</comment>
<comment type="interaction">
    <interactant intactId="EBI-11962084">
        <id>Q3LI66</id>
    </interactant>
    <interactant intactId="EBI-12010594">
        <id>O75909-2</id>
        <label>CCNK</label>
    </interactant>
    <organismsDiffer>false</organismsDiffer>
    <experiments>5</experiments>
</comment>
<comment type="interaction">
    <interactant intactId="EBI-11962084">
        <id>Q3LI66</id>
    </interactant>
    <interactant intactId="EBI-12139335">
        <id>Q8N6W0</id>
        <label>CELF5</label>
    </interactant>
    <organismsDiffer>false</organismsDiffer>
    <experiments>3</experiments>
</comment>
<comment type="interaction">
    <interactant intactId="EBI-11962084">
        <id>Q3LI66</id>
    </interactant>
    <interactant intactId="EBI-12261896">
        <id>Q5T4B2</id>
        <label>CERCAM</label>
    </interactant>
    <organismsDiffer>false</organismsDiffer>
    <experiments>3</experiments>
</comment>
<comment type="interaction">
    <interactant intactId="EBI-11962084">
        <id>Q3LI66</id>
    </interactant>
    <interactant intactId="EBI-10274247">
        <id>Q8TCT0</id>
        <label>CERK</label>
    </interactant>
    <organismsDiffer>false</organismsDiffer>
    <experiments>3</experiments>
</comment>
<comment type="interaction">
    <interactant intactId="EBI-11962084">
        <id>Q3LI66</id>
    </interactant>
    <interactant intactId="EBI-9038570">
        <id>P27918</id>
        <label>CFP</label>
    </interactant>
    <organismsDiffer>false</organismsDiffer>
    <experiments>5</experiments>
</comment>
<comment type="interaction">
    <interactant intactId="EBI-11962084">
        <id>Q3LI66</id>
    </interactant>
    <interactant intactId="EBI-741528">
        <id>Q9UKJ5</id>
        <label>CHIC2</label>
    </interactant>
    <organismsDiffer>false</organismsDiffer>
    <experiments>3</experiments>
</comment>
<comment type="interaction">
    <interactant intactId="EBI-11962084">
        <id>Q3LI66</id>
    </interactant>
    <interactant intactId="EBI-12155483">
        <id>Q9H1P6</id>
        <label>CIMIP1</label>
    </interactant>
    <organismsDiffer>false</organismsDiffer>
    <experiments>3</experiments>
</comment>
<comment type="interaction">
    <interactant intactId="EBI-11962084">
        <id>Q3LI66</id>
    </interactant>
    <interactant intactId="EBI-12160437">
        <id>A8MTA8-2</id>
        <label>CIMIP2B</label>
    </interactant>
    <organismsDiffer>false</organismsDiffer>
    <experiments>3</experiments>
</comment>
<comment type="interaction">
    <interactant intactId="EBI-11962084">
        <id>Q3LI66</id>
    </interactant>
    <interactant intactId="EBI-747133">
        <id>P27658</id>
        <label>COL8A1</label>
    </interactant>
    <organismsDiffer>false</organismsDiffer>
    <experiments>5</experiments>
</comment>
<comment type="interaction">
    <interactant intactId="EBI-11962084">
        <id>Q3LI66</id>
    </interactant>
    <interactant intactId="EBI-10192698">
        <id>Q02930-3</id>
        <label>CREB5</label>
    </interactant>
    <organismsDiffer>false</organismsDiffer>
    <experiments>5</experiments>
</comment>
<comment type="interaction">
    <interactant intactId="EBI-11962084">
        <id>Q3LI66</id>
    </interactant>
    <interactant intactId="EBI-10295404">
        <id>Q99895</id>
        <label>CTRC</label>
    </interactant>
    <organismsDiffer>false</organismsDiffer>
    <experiments>3</experiments>
</comment>
<comment type="interaction">
    <interactant intactId="EBI-11962084">
        <id>Q3LI66</id>
    </interactant>
    <interactant intactId="EBI-3867333">
        <id>A8MQ03</id>
        <label>CYSRT1</label>
    </interactant>
    <organismsDiffer>false</organismsDiffer>
    <experiments>8</experiments>
</comment>
<comment type="interaction">
    <interactant intactId="EBI-11962084">
        <id>Q3LI66</id>
    </interactant>
    <interactant intactId="EBI-724310">
        <id>Q15038</id>
        <label>DAZAP2</label>
    </interactant>
    <organismsDiffer>false</organismsDiffer>
    <experiments>3</experiments>
</comment>
<comment type="interaction">
    <interactant intactId="EBI-11962084">
        <id>Q3LI66</id>
    </interactant>
    <interactant intactId="EBI-746300">
        <id>Q96LJ7</id>
        <label>DHRS1</label>
    </interactant>
    <organismsDiffer>false</organismsDiffer>
    <experiments>3</experiments>
</comment>
<comment type="interaction">
    <interactant intactId="EBI-11962084">
        <id>Q3LI66</id>
    </interactant>
    <interactant intactId="EBI-9679045">
        <id>Q9NQL9</id>
        <label>DMRT3</label>
    </interactant>
    <organismsDiffer>false</organismsDiffer>
    <experiments>3</experiments>
</comment>
<comment type="interaction">
    <interactant intactId="EBI-11962084">
        <id>Q3LI66</id>
    </interactant>
    <interactant intactId="EBI-744099">
        <id>Q9H0I2</id>
        <label>ENKD1</label>
    </interactant>
    <organismsDiffer>false</organismsDiffer>
    <experiments>3</experiments>
</comment>
<comment type="interaction">
    <interactant intactId="EBI-11962084">
        <id>Q3LI66</id>
    </interactant>
    <interactant intactId="EBI-12259414">
        <id>Q92731-3</id>
        <label>ESR2</label>
    </interactant>
    <organismsDiffer>false</organismsDiffer>
    <experiments>3</experiments>
</comment>
<comment type="interaction">
    <interactant intactId="EBI-11962084">
        <id>Q3LI66</id>
    </interactant>
    <interactant intactId="EBI-12013806">
        <id>Q6NZ36-4</id>
        <label>FAAP20</label>
    </interactant>
    <organismsDiffer>false</organismsDiffer>
    <experiments>3</experiments>
</comment>
<comment type="interaction">
    <interactant intactId="EBI-11962084">
        <id>Q3LI66</id>
    </interactant>
    <interactant intactId="EBI-11978259">
        <id>Q92567-2</id>
        <label>FAM168A</label>
    </interactant>
    <organismsDiffer>false</organismsDiffer>
    <experiments>5</experiments>
</comment>
<comment type="interaction">
    <interactant intactId="EBI-11962084">
        <id>Q3LI66</id>
    </interactant>
    <interactant intactId="EBI-1384254">
        <id>Q86UY5</id>
        <label>FAM83A</label>
    </interactant>
    <organismsDiffer>false</organismsDiffer>
    <experiments>5</experiments>
</comment>
<comment type="interaction">
    <interactant intactId="EBI-11962084">
        <id>Q3LI66</id>
    </interactant>
    <interactant intactId="EBI-17282008">
        <id>O60548</id>
        <label>FOXD2</label>
    </interactant>
    <organismsDiffer>false</organismsDiffer>
    <experiments>3</experiments>
</comment>
<comment type="interaction">
    <interactant intactId="EBI-11962084">
        <id>Q3LI66</id>
    </interactant>
    <interactant intactId="EBI-11320806">
        <id>Q9NU39</id>
        <label>FOXD4L1</label>
    </interactant>
    <organismsDiffer>false</organismsDiffer>
    <experiments>3</experiments>
</comment>
<comment type="interaction">
    <interactant intactId="EBI-11962084">
        <id>Q3LI66</id>
    </interactant>
    <interactant intactId="EBI-11961494">
        <id>Q6VB84</id>
        <label>FOXD4L3</label>
    </interactant>
    <organismsDiffer>false</organismsDiffer>
    <experiments>3</experiments>
</comment>
<comment type="interaction">
    <interactant intactId="EBI-11962084">
        <id>Q3LI66</id>
    </interactant>
    <interactant intactId="EBI-983719">
        <id>Q9BZS1</id>
        <label>FOXP3</label>
    </interactant>
    <organismsDiffer>false</organismsDiffer>
    <experiments>3</experiments>
</comment>
<comment type="interaction">
    <interactant intactId="EBI-11962084">
        <id>Q3LI66</id>
    </interactant>
    <interactant intactId="EBI-725515">
        <id>O43559</id>
        <label>FRS3</label>
    </interactant>
    <organismsDiffer>false</organismsDiffer>
    <experiments>5</experiments>
</comment>
<comment type="interaction">
    <interactant intactId="EBI-11962084">
        <id>Q3LI66</id>
    </interactant>
    <interactant intactId="EBI-750827">
        <id>P07902</id>
        <label>GALT</label>
    </interactant>
    <organismsDiffer>false</organismsDiffer>
    <experiments>3</experiments>
</comment>
<comment type="interaction">
    <interactant intactId="EBI-11962084">
        <id>Q3LI66</id>
    </interactant>
    <interactant intactId="EBI-6672518">
        <id>P23771-2</id>
        <label>GATA3</label>
    </interactant>
    <organismsDiffer>false</organismsDiffer>
    <experiments>3</experiments>
</comment>
<comment type="interaction">
    <interactant intactId="EBI-11962084">
        <id>Q3LI66</id>
    </interactant>
    <interactant intactId="EBI-10188645">
        <id>O75603</id>
        <label>GCM2</label>
    </interactant>
    <organismsDiffer>false</organismsDiffer>
    <experiments>3</experiments>
</comment>
<comment type="interaction">
    <interactant intactId="EBI-11962084">
        <id>Q3LI66</id>
    </interactant>
    <interactant intactId="EBI-7251368">
        <id>Q9BZE0</id>
        <label>GLIS2</label>
    </interactant>
    <organismsDiffer>false</organismsDiffer>
    <experiments>5</experiments>
</comment>
<comment type="interaction">
    <interactant intactId="EBI-11962084">
        <id>Q3LI66</id>
    </interactant>
    <interactant intactId="EBI-748515">
        <id>Q8IVS8</id>
        <label>GLYCTK</label>
    </interactant>
    <organismsDiffer>false</organismsDiffer>
    <experiments>5</experiments>
</comment>
<comment type="interaction">
    <interactant intactId="EBI-11962084">
        <id>Q3LI66</id>
    </interactant>
    <interactant intactId="EBI-11975289">
        <id>Q9Y223-2</id>
        <label>GNE</label>
    </interactant>
    <organismsDiffer>false</organismsDiffer>
    <experiments>3</experiments>
</comment>
<comment type="interaction">
    <interactant intactId="EBI-11962084">
        <id>Q3LI66</id>
    </interactant>
    <interactant intactId="EBI-713355">
        <id>Q13227</id>
        <label>GPS2</label>
    </interactant>
    <organismsDiffer>false</organismsDiffer>
    <experiments>5</experiments>
</comment>
<comment type="interaction">
    <interactant intactId="EBI-11962084">
        <id>Q3LI66</id>
    </interactant>
    <interactant intactId="EBI-2832909">
        <id>Q7Z429</id>
        <label>GRINA</label>
    </interactant>
    <organismsDiffer>false</organismsDiffer>
    <experiments>3</experiments>
</comment>
<comment type="interaction">
    <interactant intactId="EBI-11962084">
        <id>Q3LI66</id>
    </interactant>
    <interactant intactId="EBI-747754">
        <id>P28799</id>
        <label>GRN</label>
    </interactant>
    <organismsDiffer>false</organismsDiffer>
    <experiments>3</experiments>
</comment>
<comment type="interaction">
    <interactant intactId="EBI-11962084">
        <id>Q3LI66</id>
    </interactant>
    <interactant intactId="EBI-353467">
        <id>P09211</id>
        <label>GSTP1</label>
    </interactant>
    <organismsDiffer>false</organismsDiffer>
    <experiments>3</experiments>
</comment>
<comment type="interaction">
    <interactant intactId="EBI-11962084">
        <id>Q3LI66</id>
    </interactant>
    <interactant intactId="EBI-11956675">
        <id>Q9GZV7</id>
        <label>HAPLN2</label>
    </interactant>
    <organismsDiffer>false</organismsDiffer>
    <experiments>3</experiments>
</comment>
<comment type="interaction">
    <interactant intactId="EBI-11962084">
        <id>Q3LI66</id>
    </interactant>
    <interactant intactId="EBI-12057631">
        <id>A0A087WSW0</id>
        <label>HELT</label>
    </interactant>
    <organismsDiffer>false</organismsDiffer>
    <experiments>5</experiments>
</comment>
<comment type="interaction">
    <interactant intactId="EBI-11962084">
        <id>Q3LI66</id>
    </interactant>
    <interactant intactId="EBI-7231130">
        <id>Q9Y5J3</id>
        <label>HEY1</label>
    </interactant>
    <organismsDiffer>false</organismsDiffer>
    <experiments>3</experiments>
</comment>
<comment type="interaction">
    <interactant intactId="EBI-11962084">
        <id>Q3LI66</id>
    </interactant>
    <interactant intactId="EBI-750630">
        <id>Q9UBP5</id>
        <label>HEY2</label>
    </interactant>
    <organismsDiffer>false</organismsDiffer>
    <experiments>3</experiments>
</comment>
<comment type="interaction">
    <interactant intactId="EBI-11962084">
        <id>Q3LI66</id>
    </interactant>
    <interactant intactId="EBI-751092">
        <id>Q9NQ87</id>
        <label>HEYL</label>
    </interactant>
    <organismsDiffer>false</organismsDiffer>
    <experiments>3</experiments>
</comment>
<comment type="interaction">
    <interactant intactId="EBI-11962084">
        <id>Q3LI66</id>
    </interactant>
    <interactant intactId="EBI-747421">
        <id>Q03014</id>
        <label>HHEX</label>
    </interactant>
    <organismsDiffer>false</organismsDiffer>
    <experiments>3</experiments>
</comment>
<comment type="interaction">
    <interactant intactId="EBI-11962084">
        <id>Q3LI66</id>
    </interactant>
    <interactant intactId="EBI-740785">
        <id>P49639</id>
        <label>HOXA1</label>
    </interactant>
    <organismsDiffer>false</organismsDiffer>
    <experiments>3</experiments>
</comment>
<comment type="interaction">
    <interactant intactId="EBI-11962084">
        <id>Q3LI66</id>
    </interactant>
    <interactant intactId="EBI-745290">
        <id>P17482</id>
        <label>HOXB9</label>
    </interactant>
    <organismsDiffer>false</organismsDiffer>
    <experiments>3</experiments>
</comment>
<comment type="interaction">
    <interactant intactId="EBI-11962084">
        <id>Q3LI66</id>
    </interactant>
    <interactant intactId="EBI-1752118">
        <id>P31273</id>
        <label>HOXC8</label>
    </interactant>
    <organismsDiffer>false</organismsDiffer>
    <experiments>3</experiments>
</comment>
<comment type="interaction">
    <interactant intactId="EBI-11962084">
        <id>Q3LI66</id>
    </interactant>
    <interactant intactId="EBI-1779423">
        <id>P31274</id>
        <label>HOXC9</label>
    </interactant>
    <organismsDiffer>false</organismsDiffer>
    <experiments>3</experiments>
</comment>
<comment type="interaction">
    <interactant intactId="EBI-11962084">
        <id>Q3LI66</id>
    </interactant>
    <interactant intactId="EBI-12056251">
        <id>Q9ULV5-2</id>
        <label>HSF4</label>
    </interactant>
    <organismsDiffer>false</organismsDiffer>
    <experiments>3</experiments>
</comment>
<comment type="interaction">
    <interactant intactId="EBI-11962084">
        <id>Q3LI66</id>
    </interactant>
    <interactant intactId="EBI-2806068">
        <id>Q12891</id>
        <label>HYAL2</label>
    </interactant>
    <organismsDiffer>false</organismsDiffer>
    <experiments>3</experiments>
</comment>
<comment type="interaction">
    <interactant intactId="EBI-11962084">
        <id>Q3LI66</id>
    </interactant>
    <interactant intactId="EBI-11955401">
        <id>Q86VF2-5</id>
        <label>IGFN1</label>
    </interactant>
    <organismsDiffer>false</organismsDiffer>
    <experiments>3</experiments>
</comment>
<comment type="interaction">
    <interactant intactId="EBI-11962084">
        <id>Q3LI66</id>
    </interactant>
    <interactant intactId="EBI-6509505">
        <id>Q0VD86</id>
        <label>INCA1</label>
    </interactant>
    <organismsDiffer>false</organismsDiffer>
    <experiments>5</experiments>
</comment>
<comment type="interaction">
    <interactant intactId="EBI-11962084">
        <id>Q3LI66</id>
    </interactant>
    <interactant intactId="EBI-715611">
        <id>Q9C086</id>
        <label>INO80B</label>
    </interactant>
    <organismsDiffer>false</organismsDiffer>
    <experiments>3</experiments>
</comment>
<comment type="interaction">
    <interactant intactId="EBI-11962084">
        <id>Q3LI66</id>
    </interactant>
    <interactant intactId="EBI-11051601">
        <id>P16144-2</id>
        <label>ITGB4</label>
    </interactant>
    <organismsDiffer>false</organismsDiffer>
    <experiments>3</experiments>
</comment>
<comment type="interaction">
    <interactant intactId="EBI-11962084">
        <id>Q3LI66</id>
    </interactant>
    <interactant intactId="EBI-6426443">
        <id>Q2WGJ6</id>
        <label>KLHL38</label>
    </interactant>
    <organismsDiffer>false</organismsDiffer>
    <experiments>3</experiments>
</comment>
<comment type="interaction">
    <interactant intactId="EBI-11962084">
        <id>Q3LI66</id>
    </interactant>
    <interactant intactId="EBI-10981970">
        <id>Q5T749</id>
        <label>KPRP</label>
    </interactant>
    <organismsDiffer>false</organismsDiffer>
    <experiments>3</experiments>
</comment>
<comment type="interaction">
    <interactant intactId="EBI-11962084">
        <id>Q3LI66</id>
    </interactant>
    <interactant intactId="EBI-10221390">
        <id>P78385</id>
        <label>KRT83</label>
    </interactant>
    <organismsDiffer>false</organismsDiffer>
    <experiments>3</experiments>
</comment>
<comment type="interaction">
    <interactant intactId="EBI-11962084">
        <id>Q3LI66</id>
    </interactant>
    <interactant intactId="EBI-1052037">
        <id>Q8IUC1</id>
        <label>KRTAP11-1</label>
    </interactant>
    <organismsDiffer>false</organismsDiffer>
    <experiments>3</experiments>
</comment>
<comment type="interaction">
    <interactant intactId="EBI-11962084">
        <id>Q3LI66</id>
    </interactant>
    <interactant intactId="EBI-10210845">
        <id>P59990</id>
        <label>KRTAP12-1</label>
    </interactant>
    <organismsDiffer>false</organismsDiffer>
    <experiments>3</experiments>
</comment>
<comment type="interaction">
    <interactant intactId="EBI-11962084">
        <id>Q3LI66</id>
    </interactant>
    <interactant intactId="EBI-10176379">
        <id>P59991</id>
        <label>KRTAP12-2</label>
    </interactant>
    <organismsDiffer>false</organismsDiffer>
    <experiments>6</experiments>
</comment>
<comment type="interaction">
    <interactant intactId="EBI-11962084">
        <id>Q3LI66</id>
    </interactant>
    <interactant intactId="EBI-11953334">
        <id>P60328</id>
        <label>KRTAP12-3</label>
    </interactant>
    <organismsDiffer>false</organismsDiffer>
    <experiments>3</experiments>
</comment>
<comment type="interaction">
    <interactant intactId="EBI-11962084">
        <id>Q3LI66</id>
    </interactant>
    <interactant intactId="EBI-10176396">
        <id>P60329</id>
        <label>KRTAP12-4</label>
    </interactant>
    <organismsDiffer>false</organismsDiffer>
    <experiments>3</experiments>
</comment>
<comment type="interaction">
    <interactant intactId="EBI-11962084">
        <id>Q3LI66</id>
    </interactant>
    <interactant intactId="EBI-11992140">
        <id>Q3LI76</id>
        <label>KRTAP15-1</label>
    </interactant>
    <organismsDiffer>false</organismsDiffer>
    <experiments>3</experiments>
</comment>
<comment type="interaction">
    <interactant intactId="EBI-11962084">
        <id>Q3LI66</id>
    </interactant>
    <interactant intactId="EBI-1048945">
        <id>Q3LI72</id>
        <label>KRTAP19-5</label>
    </interactant>
    <organismsDiffer>false</organismsDiffer>
    <experiments>3</experiments>
</comment>
<comment type="interaction">
    <interactant intactId="EBI-11962084">
        <id>Q3LI66</id>
    </interactant>
    <interactant intactId="EBI-3957672">
        <id>Q6PEX3</id>
        <label>KRTAP26-1</label>
    </interactant>
    <organismsDiffer>false</organismsDiffer>
    <experiments>6</experiments>
</comment>
<comment type="interaction">
    <interactant intactId="EBI-11962084">
        <id>Q3LI66</id>
    </interactant>
    <interactant intactId="EBI-3957694">
        <id>Q9BYR6</id>
        <label>KRTAP3-3</label>
    </interactant>
    <organismsDiffer>false</organismsDiffer>
    <experiments>3</experiments>
</comment>
<comment type="interaction">
    <interactant intactId="EBI-11962084">
        <id>Q3LI66</id>
    </interactant>
    <interactant intactId="EBI-10302392">
        <id>Q9BYQ6</id>
        <label>KRTAP4-11</label>
    </interactant>
    <organismsDiffer>false</organismsDiffer>
    <experiments>3</experiments>
</comment>
<comment type="interaction">
    <interactant intactId="EBI-11962084">
        <id>Q3LI66</id>
    </interactant>
    <interactant intactId="EBI-739863">
        <id>Q9BQ66</id>
        <label>KRTAP4-12</label>
    </interactant>
    <organismsDiffer>false</organismsDiffer>
    <experiments>3</experiments>
</comment>
<comment type="interaction">
    <interactant intactId="EBI-11962084">
        <id>Q3LI66</id>
    </interactant>
    <interactant intactId="EBI-12111050">
        <id>Q3LI64</id>
        <label>KRTAP6-1</label>
    </interactant>
    <organismsDiffer>false</organismsDiffer>
    <experiments>3</experiments>
</comment>
<comment type="interaction">
    <interactant intactId="EBI-11962084">
        <id>Q3LI66</id>
    </interactant>
    <interactant intactId="EBI-11962084">
        <id>Q3LI66</id>
        <label>KRTAP6-2</label>
    </interactant>
    <organismsDiffer>false</organismsDiffer>
    <experiments>3</experiments>
</comment>
<comment type="interaction">
    <interactant intactId="EBI-11962084">
        <id>Q3LI66</id>
    </interactant>
    <interactant intactId="EBI-22311199">
        <id>Q3LI67</id>
        <label>KRTAP6-3</label>
    </interactant>
    <organismsDiffer>false</organismsDiffer>
    <experiments>3</experiments>
</comment>
<comment type="interaction">
    <interactant intactId="EBI-11962084">
        <id>Q3LI66</id>
    </interactant>
    <interactant intactId="EBI-9088686">
        <id>Q14847-2</id>
        <label>LASP1</label>
    </interactant>
    <organismsDiffer>false</organismsDiffer>
    <experiments>3</experiments>
</comment>
<comment type="interaction">
    <interactant intactId="EBI-11962084">
        <id>Q3LI66</id>
    </interactant>
    <interactant intactId="EBI-11478468">
        <id>O14633</id>
        <label>LCE2B</label>
    </interactant>
    <organismsDiffer>false</organismsDiffer>
    <experiments>3</experiments>
</comment>
<comment type="interaction">
    <interactant intactId="EBI-11962084">
        <id>Q3LI66</id>
    </interactant>
    <interactant intactId="EBI-10246750">
        <id>Q5TA82</id>
        <label>LCE2D</label>
    </interactant>
    <organismsDiffer>false</organismsDiffer>
    <experiments>3</experiments>
</comment>
<comment type="interaction">
    <interactant intactId="EBI-11962084">
        <id>Q3LI66</id>
    </interactant>
    <interactant intactId="EBI-11955689">
        <id>Q5TCM9</id>
        <label>LCE5A</label>
    </interactant>
    <organismsDiffer>false</organismsDiffer>
    <experiments>3</experiments>
</comment>
<comment type="interaction">
    <interactant intactId="EBI-11962084">
        <id>Q3LI66</id>
    </interactant>
    <interactant intactId="EBI-1052895">
        <id>O95202</id>
        <label>LETM1</label>
    </interactant>
    <organismsDiffer>false</organismsDiffer>
    <experiments>3</experiments>
</comment>
<comment type="interaction">
    <interactant intactId="EBI-11962084">
        <id>Q3LI66</id>
    </interactant>
    <interactant intactId="EBI-9088829">
        <id>Q6DKI2</id>
        <label>LGALS9C</label>
    </interactant>
    <organismsDiffer>false</organismsDiffer>
    <experiments>3</experiments>
</comment>
<comment type="interaction">
    <interactant intactId="EBI-11962084">
        <id>Q3LI66</id>
    </interactant>
    <interactant intactId="EBI-7910762">
        <id>Q6PJG9</id>
        <label>LRFN4</label>
    </interactant>
    <organismsDiffer>false</organismsDiffer>
    <experiments>3</experiments>
</comment>
<comment type="interaction">
    <interactant intactId="EBI-11962084">
        <id>Q3LI66</id>
    </interactant>
    <interactant intactId="EBI-721408">
        <id>Q15345</id>
        <label>LRRC41</label>
    </interactant>
    <organismsDiffer>false</organismsDiffer>
    <experiments>3</experiments>
</comment>
<comment type="interaction">
    <interactant intactId="EBI-11962084">
        <id>Q3LI66</id>
    </interactant>
    <interactant intactId="EBI-10329546">
        <id>Q9Y5Y7</id>
        <label>LYVE1</label>
    </interactant>
    <organismsDiffer>false</organismsDiffer>
    <experiments>3</experiments>
</comment>
<comment type="interaction">
    <interactant intactId="EBI-11962084">
        <id>Q3LI66</id>
    </interactant>
    <interactant intactId="EBI-8025850">
        <id>O14770-4</id>
        <label>MEIS2</label>
    </interactant>
    <organismsDiffer>false</organismsDiffer>
    <experiments>5</experiments>
</comment>
<comment type="interaction">
    <interactant intactId="EBI-11962084">
        <id>Q3LI66</id>
    </interactant>
    <interactant intactId="EBI-2340269">
        <id>Q13064</id>
        <label>MKRN3</label>
    </interactant>
    <organismsDiffer>false</organismsDiffer>
    <experiments>3</experiments>
</comment>
<comment type="interaction">
    <interactant intactId="EBI-11962084">
        <id>Q3LI66</id>
    </interactant>
    <interactant intactId="EBI-2515597">
        <id>Q96HR8</id>
        <label>NAF1</label>
    </interactant>
    <organismsDiffer>false</organismsDiffer>
    <experiments>3</experiments>
</comment>
<comment type="interaction">
    <interactant intactId="EBI-11962084">
        <id>Q3LI66</id>
    </interactant>
    <interactant intactId="EBI-1045087">
        <id>Q16795</id>
        <label>NDUFA9</label>
    </interactant>
    <organismsDiffer>false</organismsDiffer>
    <experiments>3</experiments>
</comment>
<comment type="interaction">
    <interactant intactId="EBI-11962084">
        <id>Q3LI66</id>
    </interactant>
    <interactant intactId="EBI-10277551">
        <id>Q8WWR8-2</id>
        <label>NEU4</label>
    </interactant>
    <organismsDiffer>false</organismsDiffer>
    <experiments>3</experiments>
</comment>
<comment type="interaction">
    <interactant intactId="EBI-11962084">
        <id>Q3LI66</id>
    </interactant>
    <interactant intactId="EBI-10271199">
        <id>Q8NI38</id>
        <label>NFKBID</label>
    </interactant>
    <organismsDiffer>false</organismsDiffer>
    <experiments>3</experiments>
</comment>
<comment type="interaction">
    <interactant intactId="EBI-11962084">
        <id>Q3LI66</id>
    </interactant>
    <interactant intactId="EBI-10261509">
        <id>Q8IV28</id>
        <label>NID2</label>
    </interactant>
    <organismsDiffer>false</organismsDiffer>
    <experiments>3</experiments>
</comment>
<comment type="interaction">
    <interactant intactId="EBI-11962084">
        <id>Q3LI66</id>
    </interactant>
    <interactant intactId="EBI-10210114">
        <id>P48146</id>
        <label>NPBWR2</label>
    </interactant>
    <organismsDiffer>false</organismsDiffer>
    <experiments>3</experiments>
</comment>
<comment type="interaction">
    <interactant intactId="EBI-11962084">
        <id>Q3LI66</id>
    </interactant>
    <interactant intactId="EBI-10250949">
        <id>Q6NSM0</id>
        <label>NR1D2</label>
    </interactant>
    <organismsDiffer>false</organismsDiffer>
    <experiments>5</experiments>
</comment>
<comment type="interaction">
    <interactant intactId="EBI-11962084">
        <id>Q3LI66</id>
    </interactant>
    <interactant intactId="EBI-11110981">
        <id>Q96L73-2</id>
        <label>NSD1</label>
    </interactant>
    <organismsDiffer>false</organismsDiffer>
    <experiments>3</experiments>
</comment>
<comment type="interaction">
    <interactant intactId="EBI-11962084">
        <id>Q3LI66</id>
    </interactant>
    <interactant intactId="EBI-10225049">
        <id>Q7RTU3</id>
        <label>OLIG3</label>
    </interactant>
    <organismsDiffer>false</organismsDiffer>
    <experiments>3</experiments>
</comment>
<comment type="interaction">
    <interactant intactId="EBI-11962084">
        <id>Q3LI66</id>
    </interactant>
    <interactant intactId="EBI-740446">
        <id>P32242</id>
        <label>OTX1</label>
    </interactant>
    <organismsDiffer>false</organismsDiffer>
    <experiments>3</experiments>
</comment>
<comment type="interaction">
    <interactant intactId="EBI-11962084">
        <id>Q3LI66</id>
    </interactant>
    <interactant intactId="EBI-2562092">
        <id>Q86TB9</id>
        <label>PATL1</label>
    </interactant>
    <organismsDiffer>false</organismsDiffer>
    <experiments>3</experiments>
</comment>
<comment type="interaction">
    <interactant intactId="EBI-11962084">
        <id>Q3LI66</id>
    </interactant>
    <interactant intactId="EBI-11022007">
        <id>Q9HBE1-4</id>
        <label>PATZ1</label>
    </interactant>
    <organismsDiffer>false</organismsDiffer>
    <experiments>3</experiments>
</comment>
<comment type="interaction">
    <interactant intactId="EBI-11962084">
        <id>Q3LI66</id>
    </interactant>
    <interactant intactId="EBI-12105196">
        <id>P23760-8</id>
        <label>PAX3</label>
    </interactant>
    <organismsDiffer>false</organismsDiffer>
    <experiments>3</experiments>
</comment>
<comment type="interaction">
    <interactant intactId="EBI-11962084">
        <id>Q3LI66</id>
    </interactant>
    <interactant intactId="EBI-2861634">
        <id>Q9P0J1</id>
        <label>PDP1</label>
    </interactant>
    <organismsDiffer>false</organismsDiffer>
    <experiments>3</experiments>
</comment>
<comment type="interaction">
    <interactant intactId="EBI-11962084">
        <id>Q3LI66</id>
    </interactant>
    <interactant intactId="EBI-14084211">
        <id>A2BDE7</id>
        <label>PHLDA1</label>
    </interactant>
    <organismsDiffer>false</organismsDiffer>
    <experiments>3</experiments>
</comment>
<comment type="interaction">
    <interactant intactId="EBI-11962084">
        <id>Q3LI66</id>
    </interactant>
    <interactant intactId="EBI-748265">
        <id>P78337</id>
        <label>PITX1</label>
    </interactant>
    <organismsDiffer>false</organismsDiffer>
    <experiments>5</experiments>
</comment>
<comment type="interaction">
    <interactant intactId="EBI-11962084">
        <id>Q3LI66</id>
    </interactant>
    <interactant intactId="EBI-7813714">
        <id>Q13563</id>
        <label>PKD2</label>
    </interactant>
    <organismsDiffer>false</organismsDiffer>
    <experiments>3</experiments>
</comment>
<comment type="interaction">
    <interactant intactId="EBI-11962084">
        <id>Q3LI66</id>
    </interactant>
    <interactant intactId="EBI-12014286">
        <id>Q494U1-3</id>
        <label>PLEKHN1</label>
    </interactant>
    <organismsDiffer>false</organismsDiffer>
    <experiments>3</experiments>
</comment>
<comment type="interaction">
    <interactant intactId="EBI-11962084">
        <id>Q3LI66</id>
    </interactant>
    <interactant intactId="EBI-769257">
        <id>Q9NRQ2</id>
        <label>PLSCR4</label>
    </interactant>
    <organismsDiffer>false</organismsDiffer>
    <experiments>3</experiments>
</comment>
<comment type="interaction">
    <interactant intactId="EBI-11962084">
        <id>Q3LI66</id>
    </interactant>
    <interactant intactId="EBI-1389308">
        <id>Q7Z3K3</id>
        <label>POGZ</label>
    </interactant>
    <organismsDiffer>false</organismsDiffer>
    <experiments>5</experiments>
</comment>
<comment type="interaction">
    <interactant intactId="EBI-11962084">
        <id>Q3LI66</id>
    </interactant>
    <interactant intactId="EBI-12849044">
        <id>Q8N7G0</id>
        <label>POU5F2</label>
    </interactant>
    <organismsDiffer>false</organismsDiffer>
    <experiments>3</experiments>
</comment>
<comment type="interaction">
    <interactant intactId="EBI-11962084">
        <id>Q3LI66</id>
    </interactant>
    <interactant intactId="EBI-740924">
        <id>Q9NZ81</id>
        <label>PRR13</label>
    </interactant>
    <organismsDiffer>false</organismsDiffer>
    <experiments>6</experiments>
</comment>
<comment type="interaction">
    <interactant intactId="EBI-11962084">
        <id>Q3LI66</id>
    </interactant>
    <interactant intactId="EBI-2803328">
        <id>P79522</id>
        <label>PRR3</label>
    </interactant>
    <organismsDiffer>false</organismsDiffer>
    <experiments>3</experiments>
</comment>
<comment type="interaction">
    <interactant intactId="EBI-11962084">
        <id>Q3LI66</id>
    </interactant>
    <interactant intactId="EBI-12360827">
        <id>Q53SZ7</id>
        <label>PRR30</label>
    </interactant>
    <organismsDiffer>false</organismsDiffer>
    <experiments>3</experiments>
</comment>
<comment type="interaction">
    <interactant intactId="EBI-11962084">
        <id>Q3LI66</id>
    </interactant>
    <interactant intactId="EBI-11986293">
        <id>P0CG20</id>
        <label>PRR35</label>
    </interactant>
    <organismsDiffer>false</organismsDiffer>
    <experiments>5</experiments>
</comment>
<comment type="interaction">
    <interactant intactId="EBI-11962084">
        <id>Q3LI66</id>
    </interactant>
    <interactant intactId="EBI-740818">
        <id>Q9Y272</id>
        <label>RASD1</label>
    </interactant>
    <organismsDiffer>false</organismsDiffer>
    <experiments>3</experiments>
</comment>
<comment type="interaction">
    <interactant intactId="EBI-11962084">
        <id>Q3LI66</id>
    </interactant>
    <interactant intactId="EBI-11963050">
        <id>O43251-10</id>
        <label>RBFOX2</label>
    </interactant>
    <organismsDiffer>false</organismsDiffer>
    <experiments>3</experiments>
</comment>
<comment type="interaction">
    <interactant intactId="EBI-11962084">
        <id>Q3LI66</id>
    </interactant>
    <interactant intactId="EBI-11987469">
        <id>Q6ZRY4</id>
        <label>RBPMS2</label>
    </interactant>
    <organismsDiffer>false</organismsDiffer>
    <experiments>3</experiments>
</comment>
<comment type="interaction">
    <interactant intactId="EBI-11962084">
        <id>Q3LI66</id>
    </interactant>
    <interactant intactId="EBI-948076">
        <id>Q9P2R6</id>
        <label>RERE</label>
    </interactant>
    <organismsDiffer>false</organismsDiffer>
    <experiments>3</experiments>
</comment>
<comment type="interaction">
    <interactant intactId="EBI-11962084">
        <id>Q3LI66</id>
    </interactant>
    <interactant intactId="EBI-372094">
        <id>Q9BQY4</id>
        <label>RHOXF2</label>
    </interactant>
    <organismsDiffer>false</organismsDiffer>
    <experiments>3</experiments>
</comment>
<comment type="interaction">
    <interactant intactId="EBI-11962084">
        <id>Q3LI66</id>
    </interactant>
    <interactant intactId="EBI-2341200">
        <id>Q9H0F5</id>
        <label>RNF38</label>
    </interactant>
    <organismsDiffer>false</organismsDiffer>
    <experiments>3</experiments>
</comment>
<comment type="interaction">
    <interactant intactId="EBI-11962084">
        <id>Q3LI66</id>
    </interactant>
    <interactant intactId="EBI-6422642">
        <id>Q01974</id>
        <label>ROR2</label>
    </interactant>
    <organismsDiffer>false</organismsDiffer>
    <experiments>3</experiments>
</comment>
<comment type="interaction">
    <interactant intactId="EBI-11962084">
        <id>Q3LI66</id>
    </interactant>
    <interactant intactId="EBI-10217913">
        <id>Q14D33</id>
        <label>RTP5</label>
    </interactant>
    <organismsDiffer>false</organismsDiffer>
    <experiments>3</experiments>
</comment>
<comment type="interaction">
    <interactant intactId="EBI-11962084">
        <id>Q3LI66</id>
    </interactant>
    <interactant intactId="EBI-11984663">
        <id>Q06455-2</id>
        <label>RUNX1T1</label>
    </interactant>
    <organismsDiffer>false</organismsDiffer>
    <experiments>3</experiments>
</comment>
<comment type="interaction">
    <interactant intactId="EBI-11962084">
        <id>Q3LI66</id>
    </interactant>
    <interactant intactId="EBI-6257312">
        <id>Q9BVN2</id>
        <label>RUSC1</label>
    </interactant>
    <organismsDiffer>false</organismsDiffer>
    <experiments>5</experiments>
</comment>
<comment type="interaction">
    <interactant intactId="EBI-11962084">
        <id>Q3LI66</id>
    </interactant>
    <interactant intactId="EBI-12148649">
        <id>Q7Z3H4</id>
        <label>SAMD7</label>
    </interactant>
    <organismsDiffer>false</organismsDiffer>
    <experiments>5</experiments>
</comment>
<comment type="interaction">
    <interactant intactId="EBI-11962084">
        <id>Q3LI66</id>
    </interactant>
    <interactant intactId="EBI-12000762">
        <id>Q7Z5V6-2</id>
        <label>SAXO4</label>
    </interactant>
    <organismsDiffer>false</organismsDiffer>
    <experiments>5</experiments>
</comment>
<comment type="interaction">
    <interactant intactId="EBI-11962084">
        <id>Q3LI66</id>
    </interactant>
    <interactant intactId="EBI-9843813">
        <id>Q9H0F6-2</id>
        <label>SHARPIN</label>
    </interactant>
    <organismsDiffer>false</organismsDiffer>
    <experiments>3</experiments>
</comment>
<comment type="interaction">
    <interactant intactId="EBI-11962084">
        <id>Q3LI66</id>
    </interactant>
    <interactant intactId="EBI-12880872">
        <id>Q8IW03</id>
        <label>SIAH3</label>
    </interactant>
    <organismsDiffer>false</organismsDiffer>
    <experiments>3</experiments>
</comment>
<comment type="interaction">
    <interactant intactId="EBI-11962084">
        <id>Q3LI66</id>
    </interactant>
    <interactant intactId="EBI-2822515">
        <id>Q8WU79</id>
        <label>SMAP2</label>
    </interactant>
    <organismsDiffer>false</organismsDiffer>
    <experiments>3</experiments>
</comment>
<comment type="interaction">
    <interactant intactId="EBI-11962084">
        <id>Q3LI66</id>
    </interactant>
    <interactant intactId="EBI-355653">
        <id>Q92922</id>
        <label>SMARCC1</label>
    </interactant>
    <organismsDiffer>false</organismsDiffer>
    <experiments>3</experiments>
</comment>
<comment type="interaction">
    <interactant intactId="EBI-11962084">
        <id>Q3LI66</id>
    </interactant>
    <interactant intactId="EBI-395421">
        <id>Q16637</id>
        <label>SMN2</label>
    </interactant>
    <organismsDiffer>false</organismsDiffer>
    <experiments>5</experiments>
</comment>
<comment type="interaction">
    <interactant intactId="EBI-11962084">
        <id>Q3LI66</id>
    </interactant>
    <interactant intactId="EBI-12275818">
        <id>Q53HV7-2</id>
        <label>SMUG1</label>
    </interactant>
    <organismsDiffer>false</organismsDiffer>
    <experiments>3</experiments>
</comment>
<comment type="interaction">
    <interactant intactId="EBI-11962084">
        <id>Q3LI66</id>
    </interactant>
    <interactant intactId="EBI-372475">
        <id>P14678-2</id>
        <label>SNRPB</label>
    </interactant>
    <organismsDiffer>false</organismsDiffer>
    <experiments>3</experiments>
</comment>
<comment type="interaction">
    <interactant intactId="EBI-11962084">
        <id>Q3LI66</id>
    </interactant>
    <interactant intactId="EBI-766589">
        <id>P09234</id>
        <label>SNRPC</label>
    </interactant>
    <organismsDiffer>false</organismsDiffer>
    <experiments>5</experiments>
</comment>
<comment type="interaction">
    <interactant intactId="EBI-11962084">
        <id>Q3LI66</id>
    </interactant>
    <interactant intactId="EBI-11959123">
        <id>Q99932-2</id>
        <label>SPAG8</label>
    </interactant>
    <organismsDiffer>false</organismsDiffer>
    <experiments>5</experiments>
</comment>
<comment type="interaction">
    <interactant intactId="EBI-11962084">
        <id>Q3LI66</id>
    </interactant>
    <interactant intactId="EBI-8635958">
        <id>Q6RVD6</id>
        <label>SPATA8</label>
    </interactant>
    <organismsDiffer>false</organismsDiffer>
    <experiments>3</experiments>
</comment>
<comment type="interaction">
    <interactant intactId="EBI-11962084">
        <id>Q3LI66</id>
    </interactant>
    <interactant intactId="EBI-743976">
        <id>Q96LM6</id>
        <label>SPMIP9</label>
    </interactant>
    <organismsDiffer>false</organismsDiffer>
    <experiments>4</experiments>
</comment>
<comment type="interaction">
    <interactant intactId="EBI-11962084">
        <id>Q3LI66</id>
    </interactant>
    <interactant intactId="EBI-2824328">
        <id>O95947</id>
        <label>TBX6</label>
    </interactant>
    <organismsDiffer>false</organismsDiffer>
    <experiments>5</experiments>
</comment>
<comment type="interaction">
    <interactant intactId="EBI-11962084">
        <id>Q3LI66</id>
    </interactant>
    <interactant intactId="EBI-11746252">
        <id>Q9NQB0-10</id>
        <label>TCF7L2</label>
    </interactant>
    <organismsDiffer>false</organismsDiffer>
    <experiments>5</experiments>
</comment>
<comment type="interaction">
    <interactant intactId="EBI-11962084">
        <id>Q3LI66</id>
    </interactant>
    <interactant intactId="EBI-8644516">
        <id>Q9BXF9</id>
        <label>TEKT3</label>
    </interactant>
    <organismsDiffer>false</organismsDiffer>
    <experiments>3</experiments>
</comment>
<comment type="interaction">
    <interactant intactId="EBI-11962084">
        <id>Q3LI66</id>
    </interactant>
    <interactant intactId="EBI-750487">
        <id>Q8WW24</id>
        <label>TEKT4</label>
    </interactant>
    <organismsDiffer>false</organismsDiffer>
    <experiments>5</experiments>
</comment>
<comment type="interaction">
    <interactant intactId="EBI-11962084">
        <id>Q3LI66</id>
    </interactant>
    <interactant intactId="EBI-10239812">
        <id>Q96M29</id>
        <label>TEKT5</label>
    </interactant>
    <organismsDiffer>false</organismsDiffer>
    <experiments>3</experiments>
</comment>
<comment type="interaction">
    <interactant intactId="EBI-11962084">
        <id>Q3LI66</id>
    </interactant>
    <interactant intactId="EBI-752030">
        <id>Q96A09</id>
        <label>TENT5B</label>
    </interactant>
    <organismsDiffer>false</organismsDiffer>
    <experiments>3</experiments>
</comment>
<comment type="interaction">
    <interactant intactId="EBI-11962084">
        <id>Q3LI66</id>
    </interactant>
    <interactant intactId="EBI-744726">
        <id>Q8NEK8</id>
        <label>TENT5D</label>
    </interactant>
    <organismsDiffer>false</organismsDiffer>
    <experiments>5</experiments>
</comment>
<comment type="interaction">
    <interactant intactId="EBI-11962084">
        <id>Q3LI66</id>
    </interactant>
    <interactant intactId="EBI-11139477">
        <id>Q96N21</id>
        <label>TEPSIN</label>
    </interactant>
    <organismsDiffer>false</organismsDiffer>
    <experiments>3</experiments>
</comment>
<comment type="interaction">
    <interactant intactId="EBI-11962084">
        <id>Q3LI66</id>
    </interactant>
    <interactant intactId="EBI-11952651">
        <id>Q7Z6R9</id>
        <label>TFAP2D</label>
    </interactant>
    <organismsDiffer>false</organismsDiffer>
    <experiments>5</experiments>
</comment>
<comment type="interaction">
    <interactant intactId="EBI-11962084">
        <id>Q3LI66</id>
    </interactant>
    <interactant intactId="EBI-11741437">
        <id>Q08117-2</id>
        <label>TLE5</label>
    </interactant>
    <organismsDiffer>false</organismsDiffer>
    <experiments>3</experiments>
</comment>
<comment type="interaction">
    <interactant intactId="EBI-11962084">
        <id>Q3LI66</id>
    </interactant>
    <interactant intactId="EBI-6101484">
        <id>O43763</id>
        <label>TLX2</label>
    </interactant>
    <organismsDiffer>false</organismsDiffer>
    <experiments>3</experiments>
</comment>
<comment type="interaction">
    <interactant intactId="EBI-11962084">
        <id>Q3LI66</id>
    </interactant>
    <interactant intactId="EBI-3939165">
        <id>O43711</id>
        <label>TLX3</label>
    </interactant>
    <organismsDiffer>false</organismsDiffer>
    <experiments>5</experiments>
</comment>
<comment type="interaction">
    <interactant intactId="EBI-11962084">
        <id>Q3LI66</id>
    </interactant>
    <interactant intactId="EBI-357849">
        <id>Q15025</id>
        <label>TNIP1</label>
    </interactant>
    <organismsDiffer>false</organismsDiffer>
    <experiments>6</experiments>
</comment>
<comment type="interaction">
    <interactant intactId="EBI-11962084">
        <id>Q3LI66</id>
    </interactant>
    <interactant intactId="EBI-74615">
        <id>Q9H0E2</id>
        <label>TOLLIP</label>
    </interactant>
    <organismsDiffer>false</organismsDiffer>
    <experiments>5</experiments>
</comment>
<comment type="interaction">
    <interactant intactId="EBI-11962084">
        <id>Q3LI66</id>
    </interactant>
    <interactant intactId="EBI-14115717">
        <id>Q8N7U7-2</id>
        <label>TPRX1</label>
    </interactant>
    <organismsDiffer>false</organismsDiffer>
    <experiments>3</experiments>
</comment>
<comment type="interaction">
    <interactant intactId="EBI-11962084">
        <id>Q3LI66</id>
    </interactant>
    <interactant intactId="EBI-358993">
        <id>Q15645</id>
        <label>TRIP13</label>
    </interactant>
    <organismsDiffer>false</organismsDiffer>
    <experiments>3</experiments>
</comment>
<comment type="interaction">
    <interactant intactId="EBI-11962084">
        <id>Q3LI66</id>
    </interactant>
    <interactant intactId="EBI-10241197">
        <id>Q3SY00</id>
        <label>TSGA10IP</label>
    </interactant>
    <organismsDiffer>false</organismsDiffer>
    <experiments>3</experiments>
</comment>
<comment type="interaction">
    <interactant intactId="EBI-11962084">
        <id>Q3LI66</id>
    </interactant>
    <interactant intactId="EBI-8652667">
        <id>O14817</id>
        <label>TSPAN4</label>
    </interactant>
    <organismsDiffer>false</organismsDiffer>
    <experiments>3</experiments>
</comment>
<comment type="interaction">
    <interactant intactId="EBI-11962084">
        <id>Q3LI66</id>
    </interactant>
    <interactant intactId="EBI-12023322">
        <id>Q8N831</id>
        <label>TSPYL6</label>
    </interactant>
    <organismsDiffer>false</organismsDiffer>
    <experiments>3</experiments>
</comment>
<comment type="interaction">
    <interactant intactId="EBI-11962084">
        <id>Q3LI66</id>
    </interactant>
    <interactant intactId="EBI-2107455">
        <id>Q08AM6</id>
        <label>VAC14</label>
    </interactant>
    <organismsDiffer>false</organismsDiffer>
    <experiments>3</experiments>
</comment>
<comment type="interaction">
    <interactant intactId="EBI-11962084">
        <id>Q3LI66</id>
    </interactant>
    <interactant intactId="EBI-10191303">
        <id>O95231</id>
        <label>VENTX</label>
    </interactant>
    <organismsDiffer>false</organismsDiffer>
    <experiments>5</experiments>
</comment>
<comment type="interaction">
    <interactant intactId="EBI-11962084">
        <id>Q3LI66</id>
    </interactant>
    <interactant intactId="EBI-11957216">
        <id>A8MV65-2</id>
        <label>VGLL3</label>
    </interactant>
    <organismsDiffer>false</organismsDiffer>
    <experiments>3</experiments>
</comment>
<comment type="interaction">
    <interactant intactId="EBI-11962084">
        <id>Q3LI66</id>
    </interactant>
    <interactant intactId="EBI-2559305">
        <id>A5D8V6</id>
        <label>VPS37C</label>
    </interactant>
    <organismsDiffer>false</organismsDiffer>
    <experiments>5</experiments>
</comment>
<comment type="interaction">
    <interactant intactId="EBI-11962084">
        <id>Q3LI66</id>
    </interactant>
    <interactant intactId="EBI-10188476">
        <id>A0A0C4DGF1</id>
        <label>ZBTB32</label>
    </interactant>
    <organismsDiffer>false</organismsDiffer>
    <experiments>3</experiments>
</comment>
<comment type="interaction">
    <interactant intactId="EBI-11962084">
        <id>Q3LI66</id>
    </interactant>
    <interactant intactId="EBI-742550">
        <id>Q96K80</id>
        <label>ZC3H10</label>
    </interactant>
    <organismsDiffer>false</organismsDiffer>
    <experiments>3</experiments>
</comment>
<comment type="interaction">
    <interactant intactId="EBI-11962084">
        <id>Q3LI66</id>
    </interactant>
    <interactant intactId="EBI-11963196">
        <id>Q15915</id>
        <label>ZIC1</label>
    </interactant>
    <organismsDiffer>false</organismsDiffer>
    <experiments>3</experiments>
</comment>
<comment type="interaction">
    <interactant intactId="EBI-11962084">
        <id>Q3LI66</id>
    </interactant>
    <interactant intactId="EBI-744257">
        <id>Q96IQ9</id>
        <label>ZNF414</label>
    </interactant>
    <organismsDiffer>false</organismsDiffer>
    <experiments>5</experiments>
</comment>
<comment type="interaction">
    <interactant intactId="EBI-11962084">
        <id>Q3LI66</id>
    </interactant>
    <interactant intactId="EBI-8832437">
        <id>Q96F45</id>
        <label>ZNF503</label>
    </interactant>
    <organismsDiffer>false</organismsDiffer>
    <experiments>5</experiments>
</comment>
<comment type="interaction">
    <interactant intactId="EBI-11962084">
        <id>Q3LI66</id>
    </interactant>
    <interactant intactId="EBI-745520">
        <id>Q9P0T4</id>
        <label>ZNF581</label>
    </interactant>
    <organismsDiffer>false</organismsDiffer>
    <experiments>3</experiments>
</comment>
<comment type="interaction">
    <interactant intactId="EBI-11962084">
        <id>Q3LI66</id>
    </interactant>
    <interactant intactId="EBI-12005952">
        <id>Q8IZ20</id>
        <label>ZNF683</label>
    </interactant>
    <organismsDiffer>false</organismsDiffer>
    <experiments>3</experiments>
</comment>
<comment type="interaction">
    <interactant intactId="EBI-11962084">
        <id>Q3LI66</id>
    </interactant>
    <interactant intactId="EBI-6428016">
        <id>Q8N446</id>
        <label>ZNF843</label>
    </interactant>
    <organismsDiffer>false</organismsDiffer>
    <experiments>3</experiments>
</comment>
<comment type="similarity">
    <text evidence="2">Belongs to the KRTAP type 6 family.</text>
</comment>
<protein>
    <recommendedName>
        <fullName>Keratin-associated protein 6-2</fullName>
    </recommendedName>
</protein>
<feature type="chain" id="PRO_0000223899" description="Keratin-associated protein 6-2">
    <location>
        <begin position="1"/>
        <end position="62"/>
    </location>
</feature>